<protein>
    <recommendedName>
        <fullName evidence="1">Dihydroorotase</fullName>
        <shortName evidence="1">DHOase</shortName>
        <ecNumber evidence="1">3.5.2.3</ecNumber>
    </recommendedName>
</protein>
<gene>
    <name evidence="1" type="primary">pyrC</name>
    <name type="ordered locus">BCQ_3674</name>
</gene>
<comment type="function">
    <text evidence="1">Catalyzes the reversible cyclization of carbamoyl aspartate to dihydroorotate.</text>
</comment>
<comment type="catalytic activity">
    <reaction evidence="1">
        <text>(S)-dihydroorotate + H2O = N-carbamoyl-L-aspartate + H(+)</text>
        <dbReference type="Rhea" id="RHEA:24296"/>
        <dbReference type="ChEBI" id="CHEBI:15377"/>
        <dbReference type="ChEBI" id="CHEBI:15378"/>
        <dbReference type="ChEBI" id="CHEBI:30864"/>
        <dbReference type="ChEBI" id="CHEBI:32814"/>
        <dbReference type="EC" id="3.5.2.3"/>
    </reaction>
</comment>
<comment type="cofactor">
    <cofactor evidence="1">
        <name>Zn(2+)</name>
        <dbReference type="ChEBI" id="CHEBI:29105"/>
    </cofactor>
    <text evidence="1">Binds 2 Zn(2+) ions per subunit.</text>
</comment>
<comment type="pathway">
    <text evidence="1">Pyrimidine metabolism; UMP biosynthesis via de novo pathway; (S)-dihydroorotate from bicarbonate: step 3/3.</text>
</comment>
<comment type="similarity">
    <text evidence="1">Belongs to the metallo-dependent hydrolases superfamily. DHOase family. Class I DHOase subfamily.</text>
</comment>
<feature type="chain" id="PRO_1000193095" description="Dihydroorotase">
    <location>
        <begin position="1"/>
        <end position="428"/>
    </location>
</feature>
<feature type="active site" evidence="1">
    <location>
        <position position="304"/>
    </location>
</feature>
<feature type="binding site" evidence="1">
    <location>
        <position position="59"/>
    </location>
    <ligand>
        <name>Zn(2+)</name>
        <dbReference type="ChEBI" id="CHEBI:29105"/>
        <label>1</label>
    </ligand>
</feature>
<feature type="binding site" evidence="1">
    <location>
        <begin position="61"/>
        <end position="63"/>
    </location>
    <ligand>
        <name>substrate</name>
    </ligand>
</feature>
<feature type="binding site" evidence="1">
    <location>
        <position position="61"/>
    </location>
    <ligand>
        <name>Zn(2+)</name>
        <dbReference type="ChEBI" id="CHEBI:29105"/>
        <label>1</label>
    </ligand>
</feature>
<feature type="binding site" evidence="1">
    <location>
        <position position="93"/>
    </location>
    <ligand>
        <name>substrate</name>
    </ligand>
</feature>
<feature type="binding site" evidence="1">
    <location>
        <position position="151"/>
    </location>
    <ligand>
        <name>Zn(2+)</name>
        <dbReference type="ChEBI" id="CHEBI:29105"/>
        <label>1</label>
    </ligand>
</feature>
<feature type="binding site" evidence="1">
    <location>
        <position position="151"/>
    </location>
    <ligand>
        <name>Zn(2+)</name>
        <dbReference type="ChEBI" id="CHEBI:29105"/>
        <label>2</label>
    </ligand>
</feature>
<feature type="binding site" evidence="1">
    <location>
        <position position="178"/>
    </location>
    <ligand>
        <name>Zn(2+)</name>
        <dbReference type="ChEBI" id="CHEBI:29105"/>
        <label>2</label>
    </ligand>
</feature>
<feature type="binding site" evidence="1">
    <location>
        <position position="231"/>
    </location>
    <ligand>
        <name>Zn(2+)</name>
        <dbReference type="ChEBI" id="CHEBI:29105"/>
        <label>2</label>
    </ligand>
</feature>
<feature type="binding site" evidence="1">
    <location>
        <position position="277"/>
    </location>
    <ligand>
        <name>substrate</name>
    </ligand>
</feature>
<feature type="binding site" evidence="1">
    <location>
        <position position="304"/>
    </location>
    <ligand>
        <name>Zn(2+)</name>
        <dbReference type="ChEBI" id="CHEBI:29105"/>
        <label>1</label>
    </ligand>
</feature>
<feature type="binding site" evidence="1">
    <location>
        <position position="308"/>
    </location>
    <ligand>
        <name>substrate</name>
    </ligand>
</feature>
<feature type="binding site" evidence="1">
    <location>
        <begin position="322"/>
        <end position="323"/>
    </location>
    <ligand>
        <name>substrate</name>
    </ligand>
</feature>
<name>PYRC_BACCQ</name>
<keyword id="KW-0378">Hydrolase</keyword>
<keyword id="KW-0479">Metal-binding</keyword>
<keyword id="KW-0665">Pyrimidine biosynthesis</keyword>
<keyword id="KW-0862">Zinc</keyword>
<dbReference type="EC" id="3.5.2.3" evidence="1"/>
<dbReference type="EMBL" id="CP000227">
    <property type="protein sequence ID" value="ACM14102.1"/>
    <property type="molecule type" value="Genomic_DNA"/>
</dbReference>
<dbReference type="SMR" id="B9IVW5"/>
<dbReference type="KEGG" id="bcq:BCQ_3674"/>
<dbReference type="HOGENOM" id="CLU_015572_1_0_9"/>
<dbReference type="UniPathway" id="UPA00070">
    <property type="reaction ID" value="UER00117"/>
</dbReference>
<dbReference type="Proteomes" id="UP000000441">
    <property type="component" value="Chromosome"/>
</dbReference>
<dbReference type="GO" id="GO:0005737">
    <property type="term" value="C:cytoplasm"/>
    <property type="evidence" value="ECO:0007669"/>
    <property type="project" value="TreeGrafter"/>
</dbReference>
<dbReference type="GO" id="GO:0004038">
    <property type="term" value="F:allantoinase activity"/>
    <property type="evidence" value="ECO:0007669"/>
    <property type="project" value="TreeGrafter"/>
</dbReference>
<dbReference type="GO" id="GO:0004151">
    <property type="term" value="F:dihydroorotase activity"/>
    <property type="evidence" value="ECO:0007669"/>
    <property type="project" value="UniProtKB-UniRule"/>
</dbReference>
<dbReference type="GO" id="GO:0008270">
    <property type="term" value="F:zinc ion binding"/>
    <property type="evidence" value="ECO:0007669"/>
    <property type="project" value="UniProtKB-UniRule"/>
</dbReference>
<dbReference type="GO" id="GO:0044205">
    <property type="term" value="P:'de novo' UMP biosynthetic process"/>
    <property type="evidence" value="ECO:0007669"/>
    <property type="project" value="UniProtKB-UniRule"/>
</dbReference>
<dbReference type="GO" id="GO:0006145">
    <property type="term" value="P:purine nucleobase catabolic process"/>
    <property type="evidence" value="ECO:0007669"/>
    <property type="project" value="TreeGrafter"/>
</dbReference>
<dbReference type="CDD" id="cd01317">
    <property type="entry name" value="DHOase_IIa"/>
    <property type="match status" value="1"/>
</dbReference>
<dbReference type="FunFam" id="2.30.40.10:FF:000007">
    <property type="entry name" value="Dihydroorotase"/>
    <property type="match status" value="1"/>
</dbReference>
<dbReference type="FunFam" id="3.20.20.140:FF:000025">
    <property type="entry name" value="Dihydroorotase"/>
    <property type="match status" value="1"/>
</dbReference>
<dbReference type="Gene3D" id="3.20.20.140">
    <property type="entry name" value="Metal-dependent hydrolases"/>
    <property type="match status" value="1"/>
</dbReference>
<dbReference type="Gene3D" id="2.30.40.10">
    <property type="entry name" value="Urease, subunit C, domain 1"/>
    <property type="match status" value="2"/>
</dbReference>
<dbReference type="HAMAP" id="MF_00220_B">
    <property type="entry name" value="PyrC_classI_B"/>
    <property type="match status" value="1"/>
</dbReference>
<dbReference type="InterPro" id="IPR006680">
    <property type="entry name" value="Amidohydro-rel"/>
</dbReference>
<dbReference type="InterPro" id="IPR004722">
    <property type="entry name" value="DHOase"/>
</dbReference>
<dbReference type="InterPro" id="IPR050138">
    <property type="entry name" value="DHOase/Allantoinase_Hydrolase"/>
</dbReference>
<dbReference type="InterPro" id="IPR002195">
    <property type="entry name" value="Dihydroorotase_CS"/>
</dbReference>
<dbReference type="InterPro" id="IPR011059">
    <property type="entry name" value="Metal-dep_hydrolase_composite"/>
</dbReference>
<dbReference type="InterPro" id="IPR032466">
    <property type="entry name" value="Metal_Hydrolase"/>
</dbReference>
<dbReference type="NCBIfam" id="NF006837">
    <property type="entry name" value="PRK09357.1-2"/>
    <property type="match status" value="1"/>
</dbReference>
<dbReference type="NCBIfam" id="TIGR00857">
    <property type="entry name" value="pyrC_multi"/>
    <property type="match status" value="1"/>
</dbReference>
<dbReference type="PANTHER" id="PTHR43668">
    <property type="entry name" value="ALLANTOINASE"/>
    <property type="match status" value="1"/>
</dbReference>
<dbReference type="PANTHER" id="PTHR43668:SF2">
    <property type="entry name" value="ALLANTOINASE"/>
    <property type="match status" value="1"/>
</dbReference>
<dbReference type="Pfam" id="PF01979">
    <property type="entry name" value="Amidohydro_1"/>
    <property type="match status" value="1"/>
</dbReference>
<dbReference type="SUPFAM" id="SSF51338">
    <property type="entry name" value="Composite domain of metallo-dependent hydrolases"/>
    <property type="match status" value="1"/>
</dbReference>
<dbReference type="SUPFAM" id="SSF51556">
    <property type="entry name" value="Metallo-dependent hydrolases"/>
    <property type="match status" value="1"/>
</dbReference>
<dbReference type="PROSITE" id="PS00482">
    <property type="entry name" value="DIHYDROOROTASE_1"/>
    <property type="match status" value="1"/>
</dbReference>
<dbReference type="PROSITE" id="PS00483">
    <property type="entry name" value="DIHYDROOROTASE_2"/>
    <property type="match status" value="1"/>
</dbReference>
<evidence type="ECO:0000255" key="1">
    <source>
        <dbReference type="HAMAP-Rule" id="MF_00220"/>
    </source>
</evidence>
<reference key="1">
    <citation type="journal article" date="2009" name="J. Bacteriol.">
        <title>Complete genome sequence of the extremophilic Bacillus cereus strain Q1 with industrial applications.</title>
        <authorList>
            <person name="Xiong Z."/>
            <person name="Jiang Y."/>
            <person name="Qi D."/>
            <person name="Lu H."/>
            <person name="Yang F."/>
            <person name="Yang J."/>
            <person name="Chen L."/>
            <person name="Sun L."/>
            <person name="Xu X."/>
            <person name="Xue Y."/>
            <person name="Zhu Y."/>
            <person name="Jin Q."/>
        </authorList>
    </citation>
    <scope>NUCLEOTIDE SEQUENCE [LARGE SCALE GENOMIC DNA]</scope>
    <source>
        <strain>Q1</strain>
    </source>
</reference>
<proteinExistence type="inferred from homology"/>
<sequence>MNYLFKDGRYMNEEGKIVATDLLVQDGKIAKVAENITADNAEVIDVNGKLIAPGLVDVHVHLREPGGEHKETIETGTLAAAKGGFTTICAMPNTRPVPDCREHMEDLQNRIKEKAHVNVLPYGAITVRQAGSEMTDFETLKELGAFAFTDDGVGVQDASMMLAAMKRAAKLNMAVVAHCEENTLINKGCVHEGKFSEKHGLNGIPSVCESVHIARDILLAEAADCHYHVCHVSTKGSVRVIRDAKRAGIKVTAEVTPHHLVLCEDDIPSADPNFKMNPPLRGKEDHAALIEGLLDGTIDMIATDHAPHTAEEKAQGIERAPFGITGFETAFPLLYTNLVKKGIITLEQLIQFLTEKPADTFGLEAGRLKEGRTADITIIDLEQEEEIDPTTFLSKGKNTPFAGWKCQGWPVMTIVGGKIAWQKESALV</sequence>
<organism>
    <name type="scientific">Bacillus cereus (strain Q1)</name>
    <dbReference type="NCBI Taxonomy" id="361100"/>
    <lineage>
        <taxon>Bacteria</taxon>
        <taxon>Bacillati</taxon>
        <taxon>Bacillota</taxon>
        <taxon>Bacilli</taxon>
        <taxon>Bacillales</taxon>
        <taxon>Bacillaceae</taxon>
        <taxon>Bacillus</taxon>
        <taxon>Bacillus cereus group</taxon>
    </lineage>
</organism>
<accession>B9IVW5</accession>